<name>HEPS1_BACSU</name>
<keyword id="KW-0414">Isoprene biosynthesis</keyword>
<keyword id="KW-1185">Reference proteome</keyword>
<keyword id="KW-0749">Sporulation</keyword>
<keyword id="KW-0808">Transferase</keyword>
<dbReference type="EC" id="2.5.1.30"/>
<dbReference type="EMBL" id="M80245">
    <property type="protein sequence ID" value="AAA20854.1"/>
    <property type="molecule type" value="Genomic_DNA"/>
</dbReference>
<dbReference type="EMBL" id="AL009126">
    <property type="protein sequence ID" value="CAB14192.1"/>
    <property type="molecule type" value="Genomic_DNA"/>
</dbReference>
<dbReference type="PIR" id="C69630">
    <property type="entry name" value="C69630"/>
</dbReference>
<dbReference type="RefSeq" id="NP_390157.1">
    <property type="nucleotide sequence ID" value="NC_000964.3"/>
</dbReference>
<dbReference type="RefSeq" id="WP_004398550.1">
    <property type="nucleotide sequence ID" value="NZ_OZ025638.1"/>
</dbReference>
<dbReference type="SMR" id="P31112"/>
<dbReference type="FunCoup" id="P31112">
    <property type="interactions" value="90"/>
</dbReference>
<dbReference type="STRING" id="224308.BSU22760"/>
<dbReference type="jPOST" id="P31112"/>
<dbReference type="PaxDb" id="224308-BSU22760"/>
<dbReference type="DNASU" id="938998"/>
<dbReference type="EnsemblBacteria" id="CAB14192">
    <property type="protein sequence ID" value="CAB14192"/>
    <property type="gene ID" value="BSU_22760"/>
</dbReference>
<dbReference type="GeneID" id="938998"/>
<dbReference type="KEGG" id="bsu:BSU22760"/>
<dbReference type="eggNOG" id="COG0142">
    <property type="taxonomic scope" value="Bacteria"/>
</dbReference>
<dbReference type="InParanoid" id="P31112"/>
<dbReference type="OrthoDB" id="2417886at2"/>
<dbReference type="PhylomeDB" id="P31112"/>
<dbReference type="BioCyc" id="BSUB:BSU22760-MONOMER"/>
<dbReference type="BioCyc" id="MetaCyc:MONOMER-13769"/>
<dbReference type="BRENDA" id="2.5.1.30">
    <property type="organism ID" value="658"/>
</dbReference>
<dbReference type="SABIO-RK" id="P31112"/>
<dbReference type="Proteomes" id="UP000001570">
    <property type="component" value="Chromosome"/>
</dbReference>
<dbReference type="GO" id="GO:0000010">
    <property type="term" value="F:heptaprenyl diphosphate synthase activity"/>
    <property type="evidence" value="ECO:0007669"/>
    <property type="project" value="UniProtKB-EC"/>
</dbReference>
<dbReference type="GO" id="GO:0016765">
    <property type="term" value="F:transferase activity, transferring alkyl or aryl (other than methyl) groups"/>
    <property type="evidence" value="ECO:0000314"/>
    <property type="project" value="UniProtKB"/>
</dbReference>
<dbReference type="GO" id="GO:0008299">
    <property type="term" value="P:isoprenoid biosynthetic process"/>
    <property type="evidence" value="ECO:0007669"/>
    <property type="project" value="UniProtKB-KW"/>
</dbReference>
<dbReference type="GO" id="GO:0009234">
    <property type="term" value="P:menaquinone biosynthetic process"/>
    <property type="evidence" value="ECO:0000315"/>
    <property type="project" value="UniProtKB"/>
</dbReference>
<dbReference type="GO" id="GO:0030435">
    <property type="term" value="P:sporulation resulting in formation of a cellular spore"/>
    <property type="evidence" value="ECO:0007669"/>
    <property type="project" value="UniProtKB-KW"/>
</dbReference>
<dbReference type="FunFam" id="1.20.120.1450:FF:000001">
    <property type="entry name" value="Heptaprenyl diphosphate synthase component I"/>
    <property type="match status" value="1"/>
</dbReference>
<dbReference type="Gene3D" id="1.20.120.1450">
    <property type="match status" value="1"/>
</dbReference>
<dbReference type="InterPro" id="IPR009920">
    <property type="entry name" value="HEPPP_synth_su1"/>
</dbReference>
<dbReference type="Pfam" id="PF07307">
    <property type="entry name" value="HEPPP_synt_1"/>
    <property type="match status" value="1"/>
</dbReference>
<protein>
    <recommendedName>
        <fullName>Heptaprenyl diphosphate synthase component 1</fullName>
        <shortName>HepPP synthase subunit 1</shortName>
        <ecNumber>2.5.1.30</ecNumber>
    </recommendedName>
    <alternativeName>
        <fullName>Spore germination protein C1</fullName>
    </alternativeName>
</protein>
<evidence type="ECO:0000269" key="1">
    <source>
    </source>
</evidence>
<accession>P31112</accession>
<feature type="chain" id="PRO_0000124002" description="Heptaprenyl diphosphate synthase component 1">
    <location>
        <begin position="1"/>
        <end position="251"/>
    </location>
</feature>
<gene>
    <name type="primary">hepS</name>
    <name type="synonym">gerC1</name>
    <name type="synonym">gerCA</name>
    <name type="synonym">hepA</name>
    <name type="ordered locus">BSU22760</name>
</gene>
<organism>
    <name type="scientific">Bacillus subtilis (strain 168)</name>
    <dbReference type="NCBI Taxonomy" id="224308"/>
    <lineage>
        <taxon>Bacteria</taxon>
        <taxon>Bacillati</taxon>
        <taxon>Bacillota</taxon>
        <taxon>Bacilli</taxon>
        <taxon>Bacillales</taxon>
        <taxon>Bacillaceae</taxon>
        <taxon>Bacillus</taxon>
    </lineage>
</organism>
<comment type="function">
    <text evidence="1">Supplies heptaprenyl diphosphate, the precursor for the side chain of the isoprenoid quinone menaquinone-7 (MQ-7).</text>
</comment>
<comment type="catalytic activity">
    <reaction>
        <text>4 isopentenyl diphosphate + (2E,6E)-farnesyl diphosphate = all-trans-heptaprenyl diphosphate + 4 diphosphate</text>
        <dbReference type="Rhea" id="RHEA:27794"/>
        <dbReference type="ChEBI" id="CHEBI:33019"/>
        <dbReference type="ChEBI" id="CHEBI:58206"/>
        <dbReference type="ChEBI" id="CHEBI:128769"/>
        <dbReference type="ChEBI" id="CHEBI:175763"/>
        <dbReference type="EC" id="2.5.1.30"/>
    </reaction>
</comment>
<comment type="subunit">
    <text>Heterodimer of component I and II.</text>
</comment>
<sequence length="251" mass="29122">MQDIYGTLANLNTKLKQKLSHPYLAKHISAPKIDEDKLLLFHALFEEADIKNNDRENYIVTAMLVQSALDTHDEVTTARVIKRDENKNRQLTVLAGDYFSGLYYSLLSEMKDIYMIRTLATAIKEINEHKIRLYDRSFKDENDFFESVGIVESALFHRVAEHFNLPRWKKLSSDFFVFKRLMNGNDAFLDVIGSFIQLGKTKEEILEDCFKKAKNSIESLLPLNSPIQNILINRLKTISQDQTYHQKVEEG</sequence>
<proteinExistence type="evidence at protein level"/>
<reference key="1">
    <citation type="submission" date="1992-01" db="EMBL/GenBank/DDBJ databases">
        <title>Sequence of Bacillus subtilis dbpA, mtr(A,B), gerC(1-3), ndk, cheR, aro(B,E,F,H), trp(A-F), hisH, and tyrA genes.</title>
        <authorList>
            <person name="Henner D.J."/>
        </authorList>
    </citation>
    <scope>NUCLEOTIDE SEQUENCE [GENOMIC DNA]</scope>
    <source>
        <strain>168</strain>
    </source>
</reference>
<reference key="2">
    <citation type="journal article" date="1997" name="Nature">
        <title>The complete genome sequence of the Gram-positive bacterium Bacillus subtilis.</title>
        <authorList>
            <person name="Kunst F."/>
            <person name="Ogasawara N."/>
            <person name="Moszer I."/>
            <person name="Albertini A.M."/>
            <person name="Alloni G."/>
            <person name="Azevedo V."/>
            <person name="Bertero M.G."/>
            <person name="Bessieres P."/>
            <person name="Bolotin A."/>
            <person name="Borchert S."/>
            <person name="Borriss R."/>
            <person name="Boursier L."/>
            <person name="Brans A."/>
            <person name="Braun M."/>
            <person name="Brignell S.C."/>
            <person name="Bron S."/>
            <person name="Brouillet S."/>
            <person name="Bruschi C.V."/>
            <person name="Caldwell B."/>
            <person name="Capuano V."/>
            <person name="Carter N.M."/>
            <person name="Choi S.-K."/>
            <person name="Codani J.-J."/>
            <person name="Connerton I.F."/>
            <person name="Cummings N.J."/>
            <person name="Daniel R.A."/>
            <person name="Denizot F."/>
            <person name="Devine K.M."/>
            <person name="Duesterhoeft A."/>
            <person name="Ehrlich S.D."/>
            <person name="Emmerson P.T."/>
            <person name="Entian K.-D."/>
            <person name="Errington J."/>
            <person name="Fabret C."/>
            <person name="Ferrari E."/>
            <person name="Foulger D."/>
            <person name="Fritz C."/>
            <person name="Fujita M."/>
            <person name="Fujita Y."/>
            <person name="Fuma S."/>
            <person name="Galizzi A."/>
            <person name="Galleron N."/>
            <person name="Ghim S.-Y."/>
            <person name="Glaser P."/>
            <person name="Goffeau A."/>
            <person name="Golightly E.J."/>
            <person name="Grandi G."/>
            <person name="Guiseppi G."/>
            <person name="Guy B.J."/>
            <person name="Haga K."/>
            <person name="Haiech J."/>
            <person name="Harwood C.R."/>
            <person name="Henaut A."/>
            <person name="Hilbert H."/>
            <person name="Holsappel S."/>
            <person name="Hosono S."/>
            <person name="Hullo M.-F."/>
            <person name="Itaya M."/>
            <person name="Jones L.-M."/>
            <person name="Joris B."/>
            <person name="Karamata D."/>
            <person name="Kasahara Y."/>
            <person name="Klaerr-Blanchard M."/>
            <person name="Klein C."/>
            <person name="Kobayashi Y."/>
            <person name="Koetter P."/>
            <person name="Koningstein G."/>
            <person name="Krogh S."/>
            <person name="Kumano M."/>
            <person name="Kurita K."/>
            <person name="Lapidus A."/>
            <person name="Lardinois S."/>
            <person name="Lauber J."/>
            <person name="Lazarevic V."/>
            <person name="Lee S.-M."/>
            <person name="Levine A."/>
            <person name="Liu H."/>
            <person name="Masuda S."/>
            <person name="Mauel C."/>
            <person name="Medigue C."/>
            <person name="Medina N."/>
            <person name="Mellado R.P."/>
            <person name="Mizuno M."/>
            <person name="Moestl D."/>
            <person name="Nakai S."/>
            <person name="Noback M."/>
            <person name="Noone D."/>
            <person name="O'Reilly M."/>
            <person name="Ogawa K."/>
            <person name="Ogiwara A."/>
            <person name="Oudega B."/>
            <person name="Park S.-H."/>
            <person name="Parro V."/>
            <person name="Pohl T.M."/>
            <person name="Portetelle D."/>
            <person name="Porwollik S."/>
            <person name="Prescott A.M."/>
            <person name="Presecan E."/>
            <person name="Pujic P."/>
            <person name="Purnelle B."/>
            <person name="Rapoport G."/>
            <person name="Rey M."/>
            <person name="Reynolds S."/>
            <person name="Rieger M."/>
            <person name="Rivolta C."/>
            <person name="Rocha E."/>
            <person name="Roche B."/>
            <person name="Rose M."/>
            <person name="Sadaie Y."/>
            <person name="Sato T."/>
            <person name="Scanlan E."/>
            <person name="Schleich S."/>
            <person name="Schroeter R."/>
            <person name="Scoffone F."/>
            <person name="Sekiguchi J."/>
            <person name="Sekowska A."/>
            <person name="Seror S.J."/>
            <person name="Serror P."/>
            <person name="Shin B.-S."/>
            <person name="Soldo B."/>
            <person name="Sorokin A."/>
            <person name="Tacconi E."/>
            <person name="Takagi T."/>
            <person name="Takahashi H."/>
            <person name="Takemaru K."/>
            <person name="Takeuchi M."/>
            <person name="Tamakoshi A."/>
            <person name="Tanaka T."/>
            <person name="Terpstra P."/>
            <person name="Tognoni A."/>
            <person name="Tosato V."/>
            <person name="Uchiyama S."/>
            <person name="Vandenbol M."/>
            <person name="Vannier F."/>
            <person name="Vassarotti A."/>
            <person name="Viari A."/>
            <person name="Wambutt R."/>
            <person name="Wedler E."/>
            <person name="Wedler H."/>
            <person name="Weitzenegger T."/>
            <person name="Winters P."/>
            <person name="Wipat A."/>
            <person name="Yamamoto H."/>
            <person name="Yamane K."/>
            <person name="Yasumoto K."/>
            <person name="Yata K."/>
            <person name="Yoshida K."/>
            <person name="Yoshikawa H.-F."/>
            <person name="Zumstein E."/>
            <person name="Yoshikawa H."/>
            <person name="Danchin A."/>
        </authorList>
    </citation>
    <scope>NUCLEOTIDE SEQUENCE [LARGE SCALE GENOMIC DNA]</scope>
    <source>
        <strain>168</strain>
    </source>
</reference>
<reference key="3">
    <citation type="journal article" date="1990" name="J. Gen. Microbiol.">
        <title>Characterization and cloning of the gerC locus of Bacillus subtilis 168.</title>
        <authorList>
            <person name="Yazdi M.A."/>
            <person name="Moir A."/>
        </authorList>
    </citation>
    <scope>CHARACTERIZATION OF GERC LOCUS</scope>
</reference>
<reference key="4">
    <citation type="journal article" date="1998" name="Microbiology">
        <title>The gerC locus of Bacillus subtilis, required for menaquinone biosynthesis, is concerned only indirectly with spore germination.</title>
        <authorList>
            <person name="Leatherbarrow A.J.H."/>
            <person name="Yazdi M.A."/>
            <person name="Curson J.P."/>
            <person name="Moir A."/>
        </authorList>
    </citation>
    <scope>FUNCTION</scope>
</reference>